<protein>
    <recommendedName>
        <fullName>Bombesin</fullName>
    </recommendedName>
</protein>
<keyword id="KW-0027">Amidation</keyword>
<keyword id="KW-0878">Amphibian defense peptide</keyword>
<keyword id="KW-0165">Cleavage on pair of basic residues</keyword>
<keyword id="KW-0964">Secreted</keyword>
<keyword id="KW-0732">Signal</keyword>
<comment type="function">
    <text>Stimulates smooth muscle contraction. Role in induction of hypothermia, stimulation of DNA replication and release of many gastrointestinal hormones.</text>
</comment>
<comment type="subcellular location">
    <subcellularLocation>
        <location>Secreted</location>
    </subcellularLocation>
</comment>
<comment type="tissue specificity">
    <text>Localized to the cutaneous granular glands in the skin and the brain.</text>
</comment>
<comment type="similarity">
    <text evidence="3">Belongs to the bombesin/neuromedin-B/ranatensin family.</text>
</comment>
<reference key="1">
    <citation type="journal article" date="1990" name="Proc. Natl. Acad. Sci. U.S.A.">
        <title>Cloning of cDNAs encoding amphibian bombesin: evidence for the relationship between bombesin and gastrin-releasing peptide.</title>
        <authorList>
            <person name="Spindel E.R."/>
            <person name="Gibson B.W."/>
            <person name="Reeve J.R. Jr."/>
            <person name="Kelly M."/>
        </authorList>
    </citation>
    <scope>NUCLEOTIDE SEQUENCE [MRNA]</scope>
</reference>
<name>BOMB_BOMOR</name>
<evidence type="ECO:0000250" key="1"/>
<evidence type="ECO:0000255" key="2"/>
<evidence type="ECO:0000305" key="3"/>
<feature type="signal peptide" evidence="2">
    <location>
        <begin position="1"/>
        <end position="29"/>
    </location>
</feature>
<feature type="propeptide" id="PRO_0000003005" evidence="1">
    <location>
        <begin position="30"/>
        <end position="44"/>
    </location>
</feature>
<feature type="peptide" id="PRO_0000003006" description="Bombesin">
    <location>
        <begin position="45"/>
        <end position="58"/>
    </location>
</feature>
<feature type="propeptide" id="PRO_0000003007" evidence="1">
    <location>
        <begin position="62"/>
        <end position="119"/>
    </location>
</feature>
<feature type="modified residue" description="Methionine amide" evidence="1">
    <location>
        <position position="58"/>
    </location>
</feature>
<sequence length="119" mass="13863">MSAIPLNRILPLGFLFHLLIFSFISLSSCMEFVEDPNNQGRISLQQRLGNQWAVGHLMGKKSLQDTDFEEMESFAKRNVENMRAALLQEQNRAESERELRHAQLVVRNILEQYLKNMQN</sequence>
<organism>
    <name type="scientific">Bombina orientalis</name>
    <name type="common">Oriental fire-bellied toad</name>
    <dbReference type="NCBI Taxonomy" id="8346"/>
    <lineage>
        <taxon>Eukaryota</taxon>
        <taxon>Metazoa</taxon>
        <taxon>Chordata</taxon>
        <taxon>Craniata</taxon>
        <taxon>Vertebrata</taxon>
        <taxon>Euteleostomi</taxon>
        <taxon>Amphibia</taxon>
        <taxon>Batrachia</taxon>
        <taxon>Anura</taxon>
        <taxon>Bombinatoridae</taxon>
        <taxon>Bombina</taxon>
    </lineage>
</organism>
<accession>P21591</accession>
<dbReference type="EMBL" id="M55255">
    <property type="protein sequence ID" value="AAA48551.1"/>
    <property type="molecule type" value="mRNA"/>
</dbReference>
<dbReference type="PIR" id="A39261">
    <property type="entry name" value="A39261"/>
</dbReference>
<dbReference type="SMR" id="P21591"/>
<dbReference type="GO" id="GO:0005576">
    <property type="term" value="C:extracellular region"/>
    <property type="evidence" value="ECO:0007669"/>
    <property type="project" value="UniProtKB-SubCell"/>
</dbReference>
<dbReference type="GO" id="GO:0006952">
    <property type="term" value="P:defense response"/>
    <property type="evidence" value="ECO:0007669"/>
    <property type="project" value="UniProtKB-KW"/>
</dbReference>
<dbReference type="GO" id="GO:0007218">
    <property type="term" value="P:neuropeptide signaling pathway"/>
    <property type="evidence" value="ECO:0007669"/>
    <property type="project" value="InterPro"/>
</dbReference>
<dbReference type="InterPro" id="IPR000874">
    <property type="entry name" value="Bombesin"/>
</dbReference>
<dbReference type="Pfam" id="PF02044">
    <property type="entry name" value="Bombesin"/>
    <property type="match status" value="1"/>
</dbReference>
<dbReference type="PROSITE" id="PS00257">
    <property type="entry name" value="BOMBESIN"/>
    <property type="match status" value="1"/>
</dbReference>
<proteinExistence type="evidence at transcript level"/>